<dbReference type="EMBL" id="AF005370">
    <property type="protein sequence ID" value="AAC58096.1"/>
    <property type="molecule type" value="Genomic_DNA"/>
</dbReference>
<dbReference type="PIR" id="T03144">
    <property type="entry name" value="T03144"/>
</dbReference>
<dbReference type="RefSeq" id="NP_065548.1">
    <property type="nucleotide sequence ID" value="NC_002531.1"/>
</dbReference>
<dbReference type="KEGG" id="vg:911766"/>
<dbReference type="Proteomes" id="UP000000941">
    <property type="component" value="Segment"/>
</dbReference>
<gene>
    <name type="primary">A6</name>
</gene>
<organism>
    <name type="scientific">Alcelaphine herpesvirus 1 (strain C500)</name>
    <name type="common">AlHV-1</name>
    <name type="synonym">Malignant catarrhal fever virus</name>
    <dbReference type="NCBI Taxonomy" id="654901"/>
    <lineage>
        <taxon>Viruses</taxon>
        <taxon>Duplodnaviria</taxon>
        <taxon>Heunggongvirae</taxon>
        <taxon>Peploviricota</taxon>
        <taxon>Herviviricetes</taxon>
        <taxon>Herpesvirales</taxon>
        <taxon>Orthoherpesviridae</taxon>
        <taxon>Gammaherpesvirinae</taxon>
        <taxon>Macavirus</taxon>
        <taxon>Macavirus alcelaphinegamma1</taxon>
    </lineage>
</organism>
<name>VGA6_ALHV1</name>
<organismHost>
    <name type="scientific">Connochaetes taurinus</name>
    <name type="common">Blue wildebeest</name>
    <dbReference type="NCBI Taxonomy" id="9927"/>
</organismHost>
<protein>
    <recommendedName>
        <fullName>Uncharacterized gene A6 protein</fullName>
    </recommendedName>
</protein>
<proteinExistence type="predicted"/>
<feature type="chain" id="PRO_0000405726" description="Uncharacterized gene A6 protein">
    <location>
        <begin position="1"/>
        <end position="210"/>
    </location>
</feature>
<feature type="region of interest" description="Disordered" evidence="1">
    <location>
        <begin position="101"/>
        <end position="166"/>
    </location>
</feature>
<feature type="compositionally biased region" description="Low complexity" evidence="1">
    <location>
        <begin position="101"/>
        <end position="114"/>
    </location>
</feature>
<feature type="compositionally biased region" description="Polar residues" evidence="1">
    <location>
        <begin position="147"/>
        <end position="164"/>
    </location>
</feature>
<reference key="1">
    <citation type="journal article" date="1997" name="J. Virol.">
        <title>Primary structure of the alcelaphine herpesvirus 1 genome.</title>
        <authorList>
            <person name="Ensser A."/>
            <person name="Pflanz R."/>
            <person name="Fleckenstein B."/>
        </authorList>
    </citation>
    <scope>NUCLEOTIDE SEQUENCE [LARGE SCALE GENOMIC DNA]</scope>
</reference>
<sequence>MHKHSATADMLPISAFSPLKFLGGVVATPQGPVLWDATTTPVPFQAFPCPPAITPINQFVNYQPAPAMDKIWRPAFEDYRGVTMRPALPEVPETSLRPALQELPEPSSPQSQSSVDDDTDSKEDVTETLECAQALTDLKWGTVDPPRSTSPVTASTSSGVSSDLQKAKEQAIRRYRLIEAKDLGKLVVRGPKKDKRDPDFYIKKVPLHFS</sequence>
<evidence type="ECO:0000256" key="1">
    <source>
        <dbReference type="SAM" id="MobiDB-lite"/>
    </source>
</evidence>
<keyword id="KW-1185">Reference proteome</keyword>
<accession>O36399</accession>